<accession>P50275</accession>
<accession>D6W2C1</accession>
<keyword id="KW-0963">Cytoplasm</keyword>
<keyword id="KW-0206">Cytoskeleton</keyword>
<keyword id="KW-0493">Microtubule</keyword>
<keyword id="KW-0597">Phosphoprotein</keyword>
<keyword id="KW-1185">Reference proteome</keyword>
<comment type="function">
    <text evidence="4">Required for anaphase spindle elongation.</text>
</comment>
<comment type="subunit">
    <text evidence="3">Interacts with CDC48; the interaction is likely to result in CDC5 degradation.</text>
</comment>
<comment type="subcellular location">
    <subcellularLocation>
        <location evidence="4">Cytoplasm</location>
        <location evidence="4">Cytoskeleton</location>
        <location evidence="4">Spindle</location>
    </subcellularLocation>
</comment>
<comment type="miscellaneous">
    <text evidence="2">Present with 556 molecules/cell in log phase SD medium.</text>
</comment>
<comment type="similarity">
    <text evidence="5">Belongs to the MAP65/ASE1 family.</text>
</comment>
<dbReference type="EMBL" id="U20235">
    <property type="protein sequence ID" value="AAA75026.1"/>
    <property type="molecule type" value="Genomic_DNA"/>
</dbReference>
<dbReference type="EMBL" id="Z74966">
    <property type="protein sequence ID" value="CAA99251.1"/>
    <property type="molecule type" value="Genomic_DNA"/>
</dbReference>
<dbReference type="EMBL" id="Z70678">
    <property type="protein sequence ID" value="CAA94543.1"/>
    <property type="molecule type" value="Genomic_DNA"/>
</dbReference>
<dbReference type="EMBL" id="BK006948">
    <property type="protein sequence ID" value="DAA10837.1"/>
    <property type="molecule type" value="Genomic_DNA"/>
</dbReference>
<dbReference type="PIR" id="S59660">
    <property type="entry name" value="S59660"/>
</dbReference>
<dbReference type="RefSeq" id="NP_116582.1">
    <property type="nucleotide sequence ID" value="NM_001183477.1"/>
</dbReference>
<dbReference type="SMR" id="P50275"/>
<dbReference type="BioGRID" id="34456">
    <property type="interactions" value="289"/>
</dbReference>
<dbReference type="DIP" id="DIP-7343N"/>
<dbReference type="FunCoup" id="P50275">
    <property type="interactions" value="274"/>
</dbReference>
<dbReference type="IntAct" id="P50275">
    <property type="interactions" value="2"/>
</dbReference>
<dbReference type="MINT" id="P50275"/>
<dbReference type="STRING" id="4932.YOR058C"/>
<dbReference type="iPTMnet" id="P50275"/>
<dbReference type="PaxDb" id="4932-YOR058C"/>
<dbReference type="PeptideAtlas" id="P50275"/>
<dbReference type="TopDownProteomics" id="P50275"/>
<dbReference type="EnsemblFungi" id="YOR058C_mRNA">
    <property type="protein sequence ID" value="YOR058C"/>
    <property type="gene ID" value="YOR058C"/>
</dbReference>
<dbReference type="GeneID" id="854223"/>
<dbReference type="KEGG" id="sce:YOR058C"/>
<dbReference type="AGR" id="SGD:S000005584"/>
<dbReference type="SGD" id="S000005584">
    <property type="gene designation" value="ASE1"/>
</dbReference>
<dbReference type="VEuPathDB" id="FungiDB:YOR058C"/>
<dbReference type="eggNOG" id="KOG4302">
    <property type="taxonomic scope" value="Eukaryota"/>
</dbReference>
<dbReference type="GeneTree" id="ENSGT00390000009453"/>
<dbReference type="HOGENOM" id="CLU_333226_0_0_1"/>
<dbReference type="InParanoid" id="P50275"/>
<dbReference type="OMA" id="KRITRHF"/>
<dbReference type="OrthoDB" id="642895at2759"/>
<dbReference type="BioCyc" id="YEAST:G3O-33598-MONOMER"/>
<dbReference type="BioGRID-ORCS" id="854223">
    <property type="hits" value="0 hits in 10 CRISPR screens"/>
</dbReference>
<dbReference type="CD-CODE" id="876000F7">
    <property type="entry name" value="Centrosome"/>
</dbReference>
<dbReference type="PRO" id="PR:P50275"/>
<dbReference type="Proteomes" id="UP000002311">
    <property type="component" value="Chromosome XV"/>
</dbReference>
<dbReference type="RNAct" id="P50275">
    <property type="molecule type" value="protein"/>
</dbReference>
<dbReference type="GO" id="GO:0005737">
    <property type="term" value="C:cytoplasm"/>
    <property type="evidence" value="ECO:0007005"/>
    <property type="project" value="SGD"/>
</dbReference>
<dbReference type="GO" id="GO:0005874">
    <property type="term" value="C:microtubule"/>
    <property type="evidence" value="ECO:0007005"/>
    <property type="project" value="SGD"/>
</dbReference>
<dbReference type="GO" id="GO:0072686">
    <property type="term" value="C:mitotic spindle"/>
    <property type="evidence" value="ECO:0000314"/>
    <property type="project" value="SGD"/>
</dbReference>
<dbReference type="GO" id="GO:1990023">
    <property type="term" value="C:mitotic spindle midzone"/>
    <property type="evidence" value="ECO:0000314"/>
    <property type="project" value="SGD"/>
</dbReference>
<dbReference type="GO" id="GO:0005880">
    <property type="term" value="C:nuclear microtubule"/>
    <property type="evidence" value="ECO:0000314"/>
    <property type="project" value="SGD"/>
</dbReference>
<dbReference type="GO" id="GO:0005819">
    <property type="term" value="C:spindle"/>
    <property type="evidence" value="ECO:0000318"/>
    <property type="project" value="GO_Central"/>
</dbReference>
<dbReference type="GO" id="GO:0008017">
    <property type="term" value="F:microtubule binding"/>
    <property type="evidence" value="ECO:0000314"/>
    <property type="project" value="SGD"/>
</dbReference>
<dbReference type="GO" id="GO:0000073">
    <property type="term" value="P:initial mitotic spindle pole body separation"/>
    <property type="evidence" value="ECO:0000316"/>
    <property type="project" value="SGD"/>
</dbReference>
<dbReference type="GO" id="GO:0001578">
    <property type="term" value="P:microtubule bundle formation"/>
    <property type="evidence" value="ECO:0000314"/>
    <property type="project" value="SGD"/>
</dbReference>
<dbReference type="GO" id="GO:0000226">
    <property type="term" value="P:microtubule cytoskeleton organization"/>
    <property type="evidence" value="ECO:0000318"/>
    <property type="project" value="GO_Central"/>
</dbReference>
<dbReference type="GO" id="GO:0000022">
    <property type="term" value="P:mitotic spindle elongation"/>
    <property type="evidence" value="ECO:0000315"/>
    <property type="project" value="SGD"/>
</dbReference>
<dbReference type="GO" id="GO:0051256">
    <property type="term" value="P:mitotic spindle midzone assembly"/>
    <property type="evidence" value="ECO:0000318"/>
    <property type="project" value="GO_Central"/>
</dbReference>
<dbReference type="GO" id="GO:0007052">
    <property type="term" value="P:mitotic spindle organization"/>
    <property type="evidence" value="ECO:0000315"/>
    <property type="project" value="SGD"/>
</dbReference>
<dbReference type="GO" id="GO:0000920">
    <property type="term" value="P:septum digestion after cytokinesis"/>
    <property type="evidence" value="ECO:0000315"/>
    <property type="project" value="SGD"/>
</dbReference>
<dbReference type="GO" id="GO:0051255">
    <property type="term" value="P:spindle midzone assembly"/>
    <property type="evidence" value="ECO:0000315"/>
    <property type="project" value="SGD"/>
</dbReference>
<dbReference type="Gene3D" id="1.20.58.1520">
    <property type="match status" value="1"/>
</dbReference>
<dbReference type="InterPro" id="IPR007145">
    <property type="entry name" value="MAP65_Ase1_PRC1"/>
</dbReference>
<dbReference type="PANTHER" id="PTHR19321:SF41">
    <property type="entry name" value="FASCETTO-RELATED"/>
    <property type="match status" value="1"/>
</dbReference>
<dbReference type="PANTHER" id="PTHR19321">
    <property type="entry name" value="PROTEIN REGULATOR OF CYTOKINESIS 1 PRC1-RELATED"/>
    <property type="match status" value="1"/>
</dbReference>
<dbReference type="Pfam" id="PF03999">
    <property type="entry name" value="MAP65_ASE1"/>
    <property type="match status" value="1"/>
</dbReference>
<sequence>METATSSPLPIKSRRNSENSGSTTVIPHMNPSLATPLTVSTMVNQSNSKEFMKLTPVRIRDFGSPLKNVSTNYHFLDSENGKGNTMDNMYRENFILISKDLEKLLENLNVIYQNIGYSNTEIITKEKIIFTTISNSIKQFFEQADEELKRLSAENGIEQDILNNILERINDPSGIKTIPDLYIRNAILLQESKTVPQSPKKPLSLLSKKAALDTAKKFVLGSFLPRLRDYLKSLITLKHLIQSVKENLPGLTEADNEAIAEFPELSTLTAYLLQIENGKGDIGLSMKFIIDNRKDILKGSAFKTINEESVKHMNEVIKIYEEEYERRFKSVLTKKVSISSICEQLGTPLATLIGEDFEQDLRSYGEEENSTSEIPNFHPVDRERMSKIDITLEKLQAIHKERADKKRLLMEQCQKLWTRLKISQEYIKTFMRNNSSLSTESLGRISKEVMRLEAMKKKLIKKLISDSWDKIQELWRTLQYSEESRSKFIIVFEELRNSATTLQEDELLLETCENELKRLEEKLTLYKPILKLISDFESLQEDQEFLERSSKDSSRLLSRNSHKILLTEEKMRKRITRHFPRVINDLRIKLEEADGLFDQPFLFKGKPLSEAIDIQQQEIEAKYPRCRVRMQRSKKGKCGANKENKVIKNTFKATESSIRVPIGLNLNDANITYKTPSKKTIQGLTKNDLSQENSLARHMQGTTKLSSPNRRATRLLAPTVISRNSKGNIERPTLNRNRSSDLSSSPRINHTHGEHAVKPRQLFPIPLNKVDTKGSHIPQLTKEKALELLKRSTGTTGKENVRSPERKSSLEDYAQKLSSPYKEPEHSIYKLSMSPEGKFQLNIQQKDIESGFDDTSMMEDENDKDFITWKNEQVSKLNGFSFTDI</sequence>
<feature type="chain" id="PRO_0000064694" description="Anaphase spindle elongation protein">
    <location>
        <begin position="1"/>
        <end position="885"/>
    </location>
</feature>
<feature type="region of interest" description="Disordered" evidence="1">
    <location>
        <begin position="1"/>
        <end position="30"/>
    </location>
</feature>
<feature type="region of interest" description="Disordered" evidence="1">
    <location>
        <begin position="724"/>
        <end position="759"/>
    </location>
</feature>
<feature type="region of interest" description="Disordered" evidence="1">
    <location>
        <begin position="789"/>
        <end position="812"/>
    </location>
</feature>
<feature type="compositionally biased region" description="Low complexity" evidence="1">
    <location>
        <begin position="734"/>
        <end position="745"/>
    </location>
</feature>
<feature type="compositionally biased region" description="Basic and acidic residues" evidence="1">
    <location>
        <begin position="799"/>
        <end position="812"/>
    </location>
</feature>
<feature type="modified residue" description="Phosphoserine" evidence="6">
    <location>
        <position position="17"/>
    </location>
</feature>
<organism>
    <name type="scientific">Saccharomyces cerevisiae (strain ATCC 204508 / S288c)</name>
    <name type="common">Baker's yeast</name>
    <dbReference type="NCBI Taxonomy" id="559292"/>
    <lineage>
        <taxon>Eukaryota</taxon>
        <taxon>Fungi</taxon>
        <taxon>Dikarya</taxon>
        <taxon>Ascomycota</taxon>
        <taxon>Saccharomycotina</taxon>
        <taxon>Saccharomycetes</taxon>
        <taxon>Saccharomycetales</taxon>
        <taxon>Saccharomycetaceae</taxon>
        <taxon>Saccharomyces</taxon>
    </lineage>
</organism>
<reference key="1">
    <citation type="journal article" date="1995" name="J. Cell Biol.">
        <title>Two microtubule-associated proteins required for anaphase spindle movement in Saccharomyces cerevisiae.</title>
        <authorList>
            <person name="Pellman D."/>
            <person name="Bagget M."/>
            <person name="Tu Y.H."/>
            <person name="Fink G.R."/>
        </authorList>
    </citation>
    <scope>NUCLEOTIDE SEQUENCE [GENOMIC DNA]</scope>
    <scope>FUNCTION</scope>
    <scope>SUBCELLULAR LOCATION</scope>
</reference>
<reference key="2">
    <citation type="journal article" date="1997" name="Yeast">
        <title>The sequence of a 54.7 kb fragment of yeast chromosome XV reveals the presence of two tRNAs and 24 new open reading frames.</title>
        <authorList>
            <person name="Valens M."/>
            <person name="Bohn C."/>
            <person name="Daignan-Fornier B."/>
            <person name="Dang V.-D."/>
            <person name="Bolotin-Fukuhara M."/>
        </authorList>
    </citation>
    <scope>NUCLEOTIDE SEQUENCE [GENOMIC DNA]</scope>
</reference>
<reference key="3">
    <citation type="journal article" date="1997" name="Nature">
        <title>The nucleotide sequence of Saccharomyces cerevisiae chromosome XV.</title>
        <authorList>
            <person name="Dujon B."/>
            <person name="Albermann K."/>
            <person name="Aldea M."/>
            <person name="Alexandraki D."/>
            <person name="Ansorge W."/>
            <person name="Arino J."/>
            <person name="Benes V."/>
            <person name="Bohn C."/>
            <person name="Bolotin-Fukuhara M."/>
            <person name="Bordonne R."/>
            <person name="Boyer J."/>
            <person name="Camasses A."/>
            <person name="Casamayor A."/>
            <person name="Casas C."/>
            <person name="Cheret G."/>
            <person name="Cziepluch C."/>
            <person name="Daignan-Fornier B."/>
            <person name="Dang V.-D."/>
            <person name="de Haan M."/>
            <person name="Delius H."/>
            <person name="Durand P."/>
            <person name="Fairhead C."/>
            <person name="Feldmann H."/>
            <person name="Gaillon L."/>
            <person name="Galisson F."/>
            <person name="Gamo F.-J."/>
            <person name="Gancedo C."/>
            <person name="Goffeau A."/>
            <person name="Goulding S.E."/>
            <person name="Grivell L.A."/>
            <person name="Habbig B."/>
            <person name="Hand N.J."/>
            <person name="Hani J."/>
            <person name="Hattenhorst U."/>
            <person name="Hebling U."/>
            <person name="Hernando Y."/>
            <person name="Herrero E."/>
            <person name="Heumann K."/>
            <person name="Hiesel R."/>
            <person name="Hilger F."/>
            <person name="Hofmann B."/>
            <person name="Hollenberg C.P."/>
            <person name="Hughes B."/>
            <person name="Jauniaux J.-C."/>
            <person name="Kalogeropoulos A."/>
            <person name="Katsoulou C."/>
            <person name="Kordes E."/>
            <person name="Lafuente M.J."/>
            <person name="Landt O."/>
            <person name="Louis E.J."/>
            <person name="Maarse A.C."/>
            <person name="Madania A."/>
            <person name="Mannhaupt G."/>
            <person name="Marck C."/>
            <person name="Martin R.P."/>
            <person name="Mewes H.-W."/>
            <person name="Michaux G."/>
            <person name="Paces V."/>
            <person name="Parle-McDermott A.G."/>
            <person name="Pearson B.M."/>
            <person name="Perrin A."/>
            <person name="Pettersson B."/>
            <person name="Poch O."/>
            <person name="Pohl T.M."/>
            <person name="Poirey R."/>
            <person name="Portetelle D."/>
            <person name="Pujol A."/>
            <person name="Purnelle B."/>
            <person name="Ramezani Rad M."/>
            <person name="Rechmann S."/>
            <person name="Schwager C."/>
            <person name="Schweizer M."/>
            <person name="Sor F."/>
            <person name="Sterky F."/>
            <person name="Tarassov I.A."/>
            <person name="Teodoru C."/>
            <person name="Tettelin H."/>
            <person name="Thierry A."/>
            <person name="Tobiasch E."/>
            <person name="Tzermia M."/>
            <person name="Uhlen M."/>
            <person name="Unseld M."/>
            <person name="Valens M."/>
            <person name="Vandenbol M."/>
            <person name="Vetter I."/>
            <person name="Vlcek C."/>
            <person name="Voet M."/>
            <person name="Volckaert G."/>
            <person name="Voss H."/>
            <person name="Wambutt R."/>
            <person name="Wedler H."/>
            <person name="Wiemann S."/>
            <person name="Winsor B."/>
            <person name="Wolfe K.H."/>
            <person name="Zollner A."/>
            <person name="Zumstein E."/>
            <person name="Kleine K."/>
        </authorList>
    </citation>
    <scope>NUCLEOTIDE SEQUENCE [LARGE SCALE GENOMIC DNA]</scope>
    <source>
        <strain>ATCC 204508 / S288c</strain>
    </source>
</reference>
<reference key="4">
    <citation type="journal article" date="2014" name="G3 (Bethesda)">
        <title>The reference genome sequence of Saccharomyces cerevisiae: Then and now.</title>
        <authorList>
            <person name="Engel S.R."/>
            <person name="Dietrich F.S."/>
            <person name="Fisk D.G."/>
            <person name="Binkley G."/>
            <person name="Balakrishnan R."/>
            <person name="Costanzo M.C."/>
            <person name="Dwight S.S."/>
            <person name="Hitz B.C."/>
            <person name="Karra K."/>
            <person name="Nash R.S."/>
            <person name="Weng S."/>
            <person name="Wong E.D."/>
            <person name="Lloyd P."/>
            <person name="Skrzypek M.S."/>
            <person name="Miyasato S.R."/>
            <person name="Simison M."/>
            <person name="Cherry J.M."/>
        </authorList>
    </citation>
    <scope>GENOME REANNOTATION</scope>
    <source>
        <strain>ATCC 204508 / S288c</strain>
    </source>
</reference>
<reference key="5">
    <citation type="journal article" date="2003" name="Cell">
        <title>The AAA-ATPase Cdc48/p97 regulates spindle disassembly at the end of mitosis.</title>
        <authorList>
            <person name="Cao K."/>
            <person name="Nakajima R."/>
            <person name="Meyer H.H."/>
            <person name="Zheng Y."/>
        </authorList>
    </citation>
    <scope>INTERACTION WITH CDC48</scope>
</reference>
<reference key="6">
    <citation type="journal article" date="2003" name="Nature">
        <title>Global analysis of protein expression in yeast.</title>
        <authorList>
            <person name="Ghaemmaghami S."/>
            <person name="Huh W.-K."/>
            <person name="Bower K."/>
            <person name="Howson R.W."/>
            <person name="Belle A."/>
            <person name="Dephoure N."/>
            <person name="O'Shea E.K."/>
            <person name="Weissman J.S."/>
        </authorList>
    </citation>
    <scope>LEVEL OF PROTEIN EXPRESSION [LARGE SCALE ANALYSIS]</scope>
</reference>
<reference key="7">
    <citation type="journal article" date="2009" name="Science">
        <title>Global analysis of Cdk1 substrate phosphorylation sites provides insights into evolution.</title>
        <authorList>
            <person name="Holt L.J."/>
            <person name="Tuch B.B."/>
            <person name="Villen J."/>
            <person name="Johnson A.D."/>
            <person name="Gygi S.P."/>
            <person name="Morgan D.O."/>
        </authorList>
    </citation>
    <scope>PHOSPHORYLATION [LARGE SCALE ANALYSIS] AT SER-17</scope>
    <scope>IDENTIFICATION BY MASS SPECTROMETRY [LARGE SCALE ANALYSIS]</scope>
</reference>
<proteinExistence type="evidence at protein level"/>
<evidence type="ECO:0000256" key="1">
    <source>
        <dbReference type="SAM" id="MobiDB-lite"/>
    </source>
</evidence>
<evidence type="ECO:0000269" key="2">
    <source>
    </source>
</evidence>
<evidence type="ECO:0000269" key="3">
    <source>
    </source>
</evidence>
<evidence type="ECO:0000269" key="4">
    <source>
    </source>
</evidence>
<evidence type="ECO:0000305" key="5"/>
<evidence type="ECO:0007744" key="6">
    <source>
    </source>
</evidence>
<name>ASE1_YEAST</name>
<gene>
    <name type="primary">ASE1</name>
    <name type="ordered locus">YOR058C</name>
    <name type="ORF">YOR29-09</name>
</gene>
<protein>
    <recommendedName>
        <fullName>Anaphase spindle elongation protein</fullName>
    </recommendedName>
</protein>